<evidence type="ECO:0000250" key="1"/>
<evidence type="ECO:0000255" key="2">
    <source>
        <dbReference type="PROSITE-ProRule" id="PRU00051"/>
    </source>
</evidence>
<evidence type="ECO:0000269" key="3">
    <source>
    </source>
</evidence>
<name>CHER3_PSEPK</name>
<organism>
    <name type="scientific">Pseudomonas putida (strain ATCC 47054 / DSM 6125 / CFBP 8728 / NCIMB 11950 / KT2440)</name>
    <dbReference type="NCBI Taxonomy" id="160488"/>
    <lineage>
        <taxon>Bacteria</taxon>
        <taxon>Pseudomonadati</taxon>
        <taxon>Pseudomonadota</taxon>
        <taxon>Gammaproteobacteria</taxon>
        <taxon>Pseudomonadales</taxon>
        <taxon>Pseudomonadaceae</taxon>
        <taxon>Pseudomonas</taxon>
    </lineage>
</organism>
<sequence length="273" mass="31647">MTSERNTDIEIRLLIEAIYLKYSYDFRNYSGASIKRRILHALRQFDCLTVSALQERVLHDPGMFMQLLQYLTIPVSEMFRDPDHFLAVRNEVVPLLRTWPSIKVWIAGCSTGEEVYSMAILLREEGLLERTIIYATDINPHSLDRAKQGIYSMQSMREYEENYRLAGGRRDFAEYYTAAYGNAIMDSSLRDNVTFADHSLATDSVFSETQLVSCRNVLIYFNKDLQDRALGLFHESLCHRGFLVLGSKESVDFSAYSDRFEPLVKPQRIFRKS</sequence>
<reference key="1">
    <citation type="journal article" date="2002" name="Environ. Microbiol.">
        <title>Complete genome sequence and comparative analysis of the metabolically versatile Pseudomonas putida KT2440.</title>
        <authorList>
            <person name="Nelson K.E."/>
            <person name="Weinel C."/>
            <person name="Paulsen I.T."/>
            <person name="Dodson R.J."/>
            <person name="Hilbert H."/>
            <person name="Martins dos Santos V.A.P."/>
            <person name="Fouts D.E."/>
            <person name="Gill S.R."/>
            <person name="Pop M."/>
            <person name="Holmes M."/>
            <person name="Brinkac L.M."/>
            <person name="Beanan M.J."/>
            <person name="DeBoy R.T."/>
            <person name="Daugherty S.C."/>
            <person name="Kolonay J.F."/>
            <person name="Madupu R."/>
            <person name="Nelson W.C."/>
            <person name="White O."/>
            <person name="Peterson J.D."/>
            <person name="Khouri H.M."/>
            <person name="Hance I."/>
            <person name="Chris Lee P."/>
            <person name="Holtzapple E.K."/>
            <person name="Scanlan D."/>
            <person name="Tran K."/>
            <person name="Moazzez A."/>
            <person name="Utterback T.R."/>
            <person name="Rizzo M."/>
            <person name="Lee K."/>
            <person name="Kosack D."/>
            <person name="Moestl D."/>
            <person name="Wedler H."/>
            <person name="Lauber J."/>
            <person name="Stjepandic D."/>
            <person name="Hoheisel J."/>
            <person name="Straetz M."/>
            <person name="Heim S."/>
            <person name="Kiewitz C."/>
            <person name="Eisen J.A."/>
            <person name="Timmis K.N."/>
            <person name="Duesterhoeft A."/>
            <person name="Tuemmler B."/>
            <person name="Fraser C.M."/>
        </authorList>
    </citation>
    <scope>NUCLEOTIDE SEQUENCE [LARGE SCALE GENOMIC DNA]</scope>
    <source>
        <strain>ATCC 47054 / DSM 6125 / CFBP 8728 / NCIMB 11950 / KT2440</strain>
    </source>
</reference>
<reference key="2">
    <citation type="journal article" date="2013" name="J. Biol. Chem.">
        <title>High specificity in CheR methyltransferase function: CheR2 of Pseudomonas putida is essential for chemotaxis, whereas CheR1 is involved in biofilm formation.</title>
        <authorList>
            <person name="Garcia-Fontana C."/>
            <person name="Reyes-Darias J.A."/>
            <person name="Munoz-Martinez F."/>
            <person name="Alfonso C."/>
            <person name="Morel B."/>
            <person name="Ramos J.L."/>
            <person name="Krell T."/>
        </authorList>
    </citation>
    <scope>DISRUPTION PHENOTYPE</scope>
    <scope>GENE NAME</scope>
    <source>
        <strain>ATCC 47054 / DSM 6125 / CFBP 8728 / NCIMB 11950 / KT2440</strain>
    </source>
</reference>
<comment type="disruption phenotype">
    <text evidence="3">Mutation does not affect chemotaxis and biofilm formation.</text>
</comment>
<protein>
    <recommendedName>
        <fullName>Putative methyltransferase Cher3</fullName>
        <ecNumber>2.1.1.-</ecNumber>
    </recommendedName>
</protein>
<feature type="chain" id="PRO_0000424794" description="Putative methyltransferase Cher3">
    <location>
        <begin position="1"/>
        <end position="273"/>
    </location>
</feature>
<feature type="domain" description="CheR-type methyltransferase" evidence="2">
    <location>
        <begin position="1"/>
        <end position="273"/>
    </location>
</feature>
<feature type="binding site" evidence="1">
    <location>
        <position position="76"/>
    </location>
    <ligand>
        <name>S-adenosyl-L-methionine</name>
        <dbReference type="ChEBI" id="CHEBI:59789"/>
    </ligand>
</feature>
<feature type="binding site" evidence="1">
    <location>
        <position position="80"/>
    </location>
    <ligand>
        <name>S-adenosyl-L-methionine</name>
        <dbReference type="ChEBI" id="CHEBI:59789"/>
    </ligand>
</feature>
<feature type="binding site" evidence="1">
    <location>
        <position position="114"/>
    </location>
    <ligand>
        <name>S-adenosyl-L-methionine</name>
        <dbReference type="ChEBI" id="CHEBI:59789"/>
    </ligand>
</feature>
<feature type="binding site" evidence="1">
    <location>
        <position position="137"/>
    </location>
    <ligand>
        <name>S-adenosyl-L-methionine</name>
        <dbReference type="ChEBI" id="CHEBI:59789"/>
    </ligand>
</feature>
<feature type="binding site" evidence="1">
    <location>
        <begin position="199"/>
        <end position="200"/>
    </location>
    <ligand>
        <name>S-adenosyl-L-methionine</name>
        <dbReference type="ChEBI" id="CHEBI:59789"/>
    </ligand>
</feature>
<feature type="binding site" evidence="1">
    <location>
        <begin position="215"/>
        <end position="216"/>
    </location>
    <ligand>
        <name>S-adenosyl-L-methionine</name>
        <dbReference type="ChEBI" id="CHEBI:59789"/>
    </ligand>
</feature>
<dbReference type="EC" id="2.1.1.-"/>
<dbReference type="EMBL" id="AE015451">
    <property type="protein sequence ID" value="AAN69354.1"/>
    <property type="molecule type" value="Genomic_DNA"/>
</dbReference>
<dbReference type="RefSeq" id="NP_745890.1">
    <property type="nucleotide sequence ID" value="NC_002947.4"/>
</dbReference>
<dbReference type="RefSeq" id="WP_010954591.1">
    <property type="nucleotide sequence ID" value="NZ_CP169744.1"/>
</dbReference>
<dbReference type="SMR" id="Q88GG4"/>
<dbReference type="STRING" id="160488.PP_3760"/>
<dbReference type="PaxDb" id="160488-PP_3760"/>
<dbReference type="KEGG" id="ppu:PP_3760"/>
<dbReference type="PATRIC" id="fig|160488.4.peg.4010"/>
<dbReference type="eggNOG" id="COG1352">
    <property type="taxonomic scope" value="Bacteria"/>
</dbReference>
<dbReference type="HOGENOM" id="CLU_025854_1_0_6"/>
<dbReference type="OrthoDB" id="9816309at2"/>
<dbReference type="PhylomeDB" id="Q88GG4"/>
<dbReference type="BioCyc" id="PPUT160488:G1G01-4013-MONOMER"/>
<dbReference type="BRENDA" id="2.1.1.80">
    <property type="organism ID" value="5092"/>
</dbReference>
<dbReference type="Proteomes" id="UP000000556">
    <property type="component" value="Chromosome"/>
</dbReference>
<dbReference type="GO" id="GO:0008757">
    <property type="term" value="F:S-adenosylmethionine-dependent methyltransferase activity"/>
    <property type="evidence" value="ECO:0007669"/>
    <property type="project" value="InterPro"/>
</dbReference>
<dbReference type="GO" id="GO:0032259">
    <property type="term" value="P:methylation"/>
    <property type="evidence" value="ECO:0007669"/>
    <property type="project" value="UniProtKB-KW"/>
</dbReference>
<dbReference type="Gene3D" id="3.40.50.150">
    <property type="entry name" value="Vaccinia Virus protein VP39"/>
    <property type="match status" value="1"/>
</dbReference>
<dbReference type="InterPro" id="IPR050903">
    <property type="entry name" value="Bact_Chemotaxis_MeTrfase"/>
</dbReference>
<dbReference type="InterPro" id="IPR022642">
    <property type="entry name" value="CheR_C"/>
</dbReference>
<dbReference type="InterPro" id="IPR000780">
    <property type="entry name" value="CheR_MeTrfase"/>
</dbReference>
<dbReference type="InterPro" id="IPR022641">
    <property type="entry name" value="CheR_N"/>
</dbReference>
<dbReference type="InterPro" id="IPR029063">
    <property type="entry name" value="SAM-dependent_MTases_sf"/>
</dbReference>
<dbReference type="PANTHER" id="PTHR24422:SF8">
    <property type="entry name" value="CHEMOTAXIS PROTEIN"/>
    <property type="match status" value="1"/>
</dbReference>
<dbReference type="PANTHER" id="PTHR24422">
    <property type="entry name" value="CHEMOTAXIS PROTEIN METHYLTRANSFERASE"/>
    <property type="match status" value="1"/>
</dbReference>
<dbReference type="Pfam" id="PF01739">
    <property type="entry name" value="CheR"/>
    <property type="match status" value="1"/>
</dbReference>
<dbReference type="Pfam" id="PF03705">
    <property type="entry name" value="CheR_N"/>
    <property type="match status" value="1"/>
</dbReference>
<dbReference type="PRINTS" id="PR00996">
    <property type="entry name" value="CHERMTFRASE"/>
</dbReference>
<dbReference type="SMART" id="SM00138">
    <property type="entry name" value="MeTrc"/>
    <property type="match status" value="1"/>
</dbReference>
<dbReference type="SUPFAM" id="SSF53335">
    <property type="entry name" value="S-adenosyl-L-methionine-dependent methyltransferases"/>
    <property type="match status" value="1"/>
</dbReference>
<dbReference type="PROSITE" id="PS50123">
    <property type="entry name" value="CHER"/>
    <property type="match status" value="1"/>
</dbReference>
<gene>
    <name type="primary">cheR3</name>
    <name type="ordered locus">PP_3760</name>
</gene>
<proteinExistence type="predicted"/>
<keyword id="KW-0489">Methyltransferase</keyword>
<keyword id="KW-1185">Reference proteome</keyword>
<keyword id="KW-0949">S-adenosyl-L-methionine</keyword>
<keyword id="KW-0808">Transferase</keyword>
<accession>Q88GG4</accession>